<gene>
    <name evidence="1" type="primary">hutH</name>
    <name type="ordered locus">GWCH70_0281</name>
</gene>
<accession>C5D4K1</accession>
<feature type="chain" id="PRO_1000204363" description="Histidine ammonia-lyase">
    <location>
        <begin position="1"/>
        <end position="508"/>
    </location>
</feature>
<feature type="modified residue" description="2,3-didehydroalanine (Ser)" evidence="1">
    <location>
        <position position="142"/>
    </location>
</feature>
<feature type="cross-link" description="5-imidazolinone (Ala-Gly)" evidence="1">
    <location>
        <begin position="141"/>
        <end position="143"/>
    </location>
</feature>
<reference key="1">
    <citation type="submission" date="2009-06" db="EMBL/GenBank/DDBJ databases">
        <title>Complete sequence of chromosome of Geopacillus sp. WCH70.</title>
        <authorList>
            <consortium name="US DOE Joint Genome Institute"/>
            <person name="Lucas S."/>
            <person name="Copeland A."/>
            <person name="Lapidus A."/>
            <person name="Glavina del Rio T."/>
            <person name="Dalin E."/>
            <person name="Tice H."/>
            <person name="Bruce D."/>
            <person name="Goodwin L."/>
            <person name="Pitluck S."/>
            <person name="Chertkov O."/>
            <person name="Brettin T."/>
            <person name="Detter J.C."/>
            <person name="Han C."/>
            <person name="Larimer F."/>
            <person name="Land M."/>
            <person name="Hauser L."/>
            <person name="Kyrpides N."/>
            <person name="Mikhailova N."/>
            <person name="Brumm P."/>
            <person name="Mead D.A."/>
            <person name="Richardson P."/>
        </authorList>
    </citation>
    <scope>NUCLEOTIDE SEQUENCE [LARGE SCALE GENOMIC DNA]</scope>
    <source>
        <strain>WCH70</strain>
    </source>
</reference>
<keyword id="KW-0963">Cytoplasm</keyword>
<keyword id="KW-0369">Histidine metabolism</keyword>
<keyword id="KW-0456">Lyase</keyword>
<sequence>MVVLTGHTLTLEEVKRVLYRDELVIASKESMEAVERSRKAVEEIVANKNVVYGINTGFGKFSDVLIAAGDVEELQWNLIHSHACGVGEPFPEEVSRAMLLLRANALLKGYSGVRPIVIERLLDLLNAKIHPVIPQQGSLGASGDLAPLSHLALALLGEGEVFYRGKRVPAIEALSAEGIAPITLKAKEGLALINGTQAMTAMGVVVYLEAEQLAYESEAIAAMTIEGLRGIIDAFDEHVHLVRGYRQQVEVAARIRDYLAGSKLTTRQGELRVQDAYSLRCIPQVHGASWQVLDYVKEKLEIEINAATDNPLIFEGGAKVISGGNFHGQPIAFAMDFMKIAIAELANISERRIERLVNPQLNDLPPFLSPAPGLQSGAMIMQYTAASLVSENKTFAHPASVDSIPSSANQEDHVSMGTIASRHAYAILQNTRRVLAIELICAMQAVEYRGVENMAPKTRKLYEAVRNIVPSITKDRIFSKDIEATAQWLKGVDWPFFLQTITPTNQYS</sequence>
<organism>
    <name type="scientific">Geobacillus sp. (strain WCH70)</name>
    <dbReference type="NCBI Taxonomy" id="471223"/>
    <lineage>
        <taxon>Bacteria</taxon>
        <taxon>Bacillati</taxon>
        <taxon>Bacillota</taxon>
        <taxon>Bacilli</taxon>
        <taxon>Bacillales</taxon>
        <taxon>Anoxybacillaceae</taxon>
        <taxon>Geobacillus</taxon>
    </lineage>
</organism>
<proteinExistence type="inferred from homology"/>
<evidence type="ECO:0000255" key="1">
    <source>
        <dbReference type="HAMAP-Rule" id="MF_00229"/>
    </source>
</evidence>
<name>HUTH_GEOSW</name>
<protein>
    <recommendedName>
        <fullName evidence="1">Histidine ammonia-lyase</fullName>
        <shortName evidence="1">Histidase</shortName>
        <ecNumber evidence="1">4.3.1.3</ecNumber>
    </recommendedName>
</protein>
<dbReference type="EC" id="4.3.1.3" evidence="1"/>
<dbReference type="EMBL" id="CP001638">
    <property type="protein sequence ID" value="ACS23209.1"/>
    <property type="molecule type" value="Genomic_DNA"/>
</dbReference>
<dbReference type="SMR" id="C5D4K1"/>
<dbReference type="STRING" id="471223.GWCH70_0281"/>
<dbReference type="KEGG" id="gwc:GWCH70_0281"/>
<dbReference type="eggNOG" id="COG2986">
    <property type="taxonomic scope" value="Bacteria"/>
</dbReference>
<dbReference type="HOGENOM" id="CLU_014801_4_0_9"/>
<dbReference type="OrthoDB" id="9806955at2"/>
<dbReference type="UniPathway" id="UPA00379">
    <property type="reaction ID" value="UER00549"/>
</dbReference>
<dbReference type="GO" id="GO:0005737">
    <property type="term" value="C:cytoplasm"/>
    <property type="evidence" value="ECO:0007669"/>
    <property type="project" value="UniProtKB-SubCell"/>
</dbReference>
<dbReference type="GO" id="GO:0004397">
    <property type="term" value="F:histidine ammonia-lyase activity"/>
    <property type="evidence" value="ECO:0007669"/>
    <property type="project" value="UniProtKB-UniRule"/>
</dbReference>
<dbReference type="GO" id="GO:0019556">
    <property type="term" value="P:L-histidine catabolic process to glutamate and formamide"/>
    <property type="evidence" value="ECO:0007669"/>
    <property type="project" value="UniProtKB-UniPathway"/>
</dbReference>
<dbReference type="GO" id="GO:0019557">
    <property type="term" value="P:L-histidine catabolic process to glutamate and formate"/>
    <property type="evidence" value="ECO:0007669"/>
    <property type="project" value="UniProtKB-UniPathway"/>
</dbReference>
<dbReference type="CDD" id="cd00332">
    <property type="entry name" value="PAL-HAL"/>
    <property type="match status" value="1"/>
</dbReference>
<dbReference type="FunFam" id="1.10.275.10:FF:000008">
    <property type="entry name" value="Histidine ammonia-lyase"/>
    <property type="match status" value="1"/>
</dbReference>
<dbReference type="FunFam" id="1.20.200.10:FF:000003">
    <property type="entry name" value="Histidine ammonia-lyase"/>
    <property type="match status" value="1"/>
</dbReference>
<dbReference type="Gene3D" id="1.20.200.10">
    <property type="entry name" value="Fumarase/aspartase (Central domain)"/>
    <property type="match status" value="1"/>
</dbReference>
<dbReference type="Gene3D" id="1.10.275.10">
    <property type="entry name" value="Fumarase/aspartase (N-terminal domain)"/>
    <property type="match status" value="1"/>
</dbReference>
<dbReference type="HAMAP" id="MF_00229">
    <property type="entry name" value="His_ammonia_lyase"/>
    <property type="match status" value="1"/>
</dbReference>
<dbReference type="InterPro" id="IPR001106">
    <property type="entry name" value="Aromatic_Lyase"/>
</dbReference>
<dbReference type="InterPro" id="IPR024083">
    <property type="entry name" value="Fumarase/histidase_N"/>
</dbReference>
<dbReference type="InterPro" id="IPR005921">
    <property type="entry name" value="HutH"/>
</dbReference>
<dbReference type="InterPro" id="IPR008948">
    <property type="entry name" value="L-Aspartase-like"/>
</dbReference>
<dbReference type="InterPro" id="IPR022313">
    <property type="entry name" value="Phe/His_NH3-lyase_AS"/>
</dbReference>
<dbReference type="NCBIfam" id="TIGR01225">
    <property type="entry name" value="hutH"/>
    <property type="match status" value="1"/>
</dbReference>
<dbReference type="NCBIfam" id="NF006871">
    <property type="entry name" value="PRK09367.1"/>
    <property type="match status" value="1"/>
</dbReference>
<dbReference type="PANTHER" id="PTHR10362">
    <property type="entry name" value="HISTIDINE AMMONIA-LYASE"/>
    <property type="match status" value="1"/>
</dbReference>
<dbReference type="Pfam" id="PF00221">
    <property type="entry name" value="Lyase_aromatic"/>
    <property type="match status" value="1"/>
</dbReference>
<dbReference type="SUPFAM" id="SSF48557">
    <property type="entry name" value="L-aspartase-like"/>
    <property type="match status" value="1"/>
</dbReference>
<dbReference type="PROSITE" id="PS00488">
    <property type="entry name" value="PAL_HISTIDASE"/>
    <property type="match status" value="1"/>
</dbReference>
<comment type="catalytic activity">
    <reaction evidence="1">
        <text>L-histidine = trans-urocanate + NH4(+)</text>
        <dbReference type="Rhea" id="RHEA:21232"/>
        <dbReference type="ChEBI" id="CHEBI:17771"/>
        <dbReference type="ChEBI" id="CHEBI:28938"/>
        <dbReference type="ChEBI" id="CHEBI:57595"/>
        <dbReference type="EC" id="4.3.1.3"/>
    </reaction>
</comment>
<comment type="pathway">
    <text evidence="1">Amino-acid degradation; L-histidine degradation into L-glutamate; N-formimidoyl-L-glutamate from L-histidine: step 1/3.</text>
</comment>
<comment type="subcellular location">
    <subcellularLocation>
        <location evidence="1">Cytoplasm</location>
    </subcellularLocation>
</comment>
<comment type="PTM">
    <text evidence="1">Contains an active site 4-methylidene-imidazol-5-one (MIO), which is formed autocatalytically by cyclization and dehydration of residues Ala-Ser-Gly.</text>
</comment>
<comment type="similarity">
    <text evidence="1">Belongs to the PAL/histidase family.</text>
</comment>